<feature type="chain" id="PRO_0000165585" description="Holliday junction branch migration complex subunit RuvB">
    <location>
        <begin position="1"/>
        <end position="366"/>
    </location>
</feature>
<feature type="region of interest" description="Disordered" evidence="2">
    <location>
        <begin position="1"/>
        <end position="48"/>
    </location>
</feature>
<feature type="region of interest" description="Large ATPase domain (RuvB-L)" evidence="1">
    <location>
        <begin position="21"/>
        <end position="212"/>
    </location>
</feature>
<feature type="region of interest" description="Small ATPAse domain (RuvB-S)" evidence="1">
    <location>
        <begin position="213"/>
        <end position="283"/>
    </location>
</feature>
<feature type="region of interest" description="Head domain (RuvB-H)" evidence="1">
    <location>
        <begin position="286"/>
        <end position="366"/>
    </location>
</feature>
<feature type="binding site" evidence="1">
    <location>
        <position position="51"/>
    </location>
    <ligand>
        <name>ATP</name>
        <dbReference type="ChEBI" id="CHEBI:30616"/>
    </ligand>
</feature>
<feature type="binding site" evidence="1">
    <location>
        <position position="52"/>
    </location>
    <ligand>
        <name>ATP</name>
        <dbReference type="ChEBI" id="CHEBI:30616"/>
    </ligand>
</feature>
<feature type="binding site" evidence="1">
    <location>
        <position position="93"/>
    </location>
    <ligand>
        <name>ATP</name>
        <dbReference type="ChEBI" id="CHEBI:30616"/>
    </ligand>
</feature>
<feature type="binding site" evidence="1">
    <location>
        <position position="96"/>
    </location>
    <ligand>
        <name>ATP</name>
        <dbReference type="ChEBI" id="CHEBI:30616"/>
    </ligand>
</feature>
<feature type="binding site" evidence="1">
    <location>
        <position position="97"/>
    </location>
    <ligand>
        <name>ATP</name>
        <dbReference type="ChEBI" id="CHEBI:30616"/>
    </ligand>
</feature>
<feature type="binding site" evidence="1">
    <location>
        <position position="97"/>
    </location>
    <ligand>
        <name>Mg(2+)</name>
        <dbReference type="ChEBI" id="CHEBI:18420"/>
    </ligand>
</feature>
<feature type="binding site" evidence="1">
    <location>
        <position position="98"/>
    </location>
    <ligand>
        <name>ATP</name>
        <dbReference type="ChEBI" id="CHEBI:30616"/>
    </ligand>
</feature>
<feature type="binding site" evidence="1">
    <location>
        <begin position="159"/>
        <end position="161"/>
    </location>
    <ligand>
        <name>ATP</name>
        <dbReference type="ChEBI" id="CHEBI:30616"/>
    </ligand>
</feature>
<feature type="binding site" evidence="1">
    <location>
        <position position="202"/>
    </location>
    <ligand>
        <name>ATP</name>
        <dbReference type="ChEBI" id="CHEBI:30616"/>
    </ligand>
</feature>
<feature type="binding site" evidence="1">
    <location>
        <position position="212"/>
    </location>
    <ligand>
        <name>ATP</name>
        <dbReference type="ChEBI" id="CHEBI:30616"/>
    </ligand>
</feature>
<feature type="binding site" evidence="1">
    <location>
        <position position="249"/>
    </location>
    <ligand>
        <name>ATP</name>
        <dbReference type="ChEBI" id="CHEBI:30616"/>
    </ligand>
</feature>
<feature type="binding site" evidence="1">
    <location>
        <position position="341"/>
    </location>
    <ligand>
        <name>DNA</name>
        <dbReference type="ChEBI" id="CHEBI:16991"/>
    </ligand>
</feature>
<feature type="binding site" evidence="1">
    <location>
        <position position="343"/>
    </location>
    <ligand>
        <name>DNA</name>
        <dbReference type="ChEBI" id="CHEBI:16991"/>
    </ligand>
</feature>
<feature type="binding site" evidence="1">
    <location>
        <position position="346"/>
    </location>
    <ligand>
        <name>DNA</name>
        <dbReference type="ChEBI" id="CHEBI:16991"/>
    </ligand>
</feature>
<keyword id="KW-0067">ATP-binding</keyword>
<keyword id="KW-0963">Cytoplasm</keyword>
<keyword id="KW-0227">DNA damage</keyword>
<keyword id="KW-0233">DNA recombination</keyword>
<keyword id="KW-0234">DNA repair</keyword>
<keyword id="KW-0238">DNA-binding</keyword>
<keyword id="KW-0378">Hydrolase</keyword>
<keyword id="KW-0547">Nucleotide-binding</keyword>
<keyword id="KW-1185">Reference proteome</keyword>
<accession>Q7UPG4</accession>
<comment type="function">
    <text evidence="1">The RuvA-RuvB-RuvC complex processes Holliday junction (HJ) DNA during genetic recombination and DNA repair, while the RuvA-RuvB complex plays an important role in the rescue of blocked DNA replication forks via replication fork reversal (RFR). RuvA specifically binds to HJ cruciform DNA, conferring on it an open structure. The RuvB hexamer acts as an ATP-dependent pump, pulling dsDNA into and through the RuvAB complex. RuvB forms 2 homohexamers on either side of HJ DNA bound by 1 or 2 RuvA tetramers; 4 subunits per hexamer contact DNA at a time. Coordinated motions by a converter formed by DNA-disengaged RuvB subunits stimulates ATP hydrolysis and nucleotide exchange. Immobilization of the converter enables RuvB to convert the ATP-contained energy into a lever motion, pulling 2 nucleotides of DNA out of the RuvA tetramer per ATP hydrolyzed, thus driving DNA branch migration. The RuvB motors rotate together with the DNA substrate, which together with the progressing nucleotide cycle form the mechanistic basis for DNA recombination by continuous HJ branch migration. Branch migration allows RuvC to scan DNA until it finds its consensus sequence, where it cleaves and resolves cruciform DNA.</text>
</comment>
<comment type="catalytic activity">
    <reaction evidence="1">
        <text>ATP + H2O = ADP + phosphate + H(+)</text>
        <dbReference type="Rhea" id="RHEA:13065"/>
        <dbReference type="ChEBI" id="CHEBI:15377"/>
        <dbReference type="ChEBI" id="CHEBI:15378"/>
        <dbReference type="ChEBI" id="CHEBI:30616"/>
        <dbReference type="ChEBI" id="CHEBI:43474"/>
        <dbReference type="ChEBI" id="CHEBI:456216"/>
    </reaction>
</comment>
<comment type="subunit">
    <text evidence="1">Homohexamer. Forms an RuvA(8)-RuvB(12)-Holliday junction (HJ) complex. HJ DNA is sandwiched between 2 RuvA tetramers; dsDNA enters through RuvA and exits via RuvB. An RuvB hexamer assembles on each DNA strand where it exits the tetramer. Each RuvB hexamer is contacted by two RuvA subunits (via domain III) on 2 adjacent RuvB subunits; this complex drives branch migration. In the full resolvosome a probable DNA-RuvA(4)-RuvB(12)-RuvC(2) complex forms which resolves the HJ.</text>
</comment>
<comment type="subcellular location">
    <subcellularLocation>
        <location evidence="1">Cytoplasm</location>
    </subcellularLocation>
</comment>
<comment type="domain">
    <text evidence="1">Has 3 domains, the large (RuvB-L) and small ATPase (RuvB-S) domains and the C-terminal head (RuvB-H) domain. The head domain binds DNA, while the ATPase domains jointly bind ATP, ADP or are empty depending on the state of the subunit in the translocation cycle. During a single DNA translocation step the structure of each domain remains the same, but their relative positions change.</text>
</comment>
<comment type="similarity">
    <text evidence="1">Belongs to the RuvB family.</text>
</comment>
<organism>
    <name type="scientific">Rhodopirellula baltica (strain DSM 10527 / NCIMB 13988 / SH1)</name>
    <dbReference type="NCBI Taxonomy" id="243090"/>
    <lineage>
        <taxon>Bacteria</taxon>
        <taxon>Pseudomonadati</taxon>
        <taxon>Planctomycetota</taxon>
        <taxon>Planctomycetia</taxon>
        <taxon>Pirellulales</taxon>
        <taxon>Pirellulaceae</taxon>
        <taxon>Rhodopirellula</taxon>
    </lineage>
</organism>
<dbReference type="EC" id="3.6.4.-" evidence="1"/>
<dbReference type="EMBL" id="BX294145">
    <property type="protein sequence ID" value="CAD75098.1"/>
    <property type="molecule type" value="Genomic_DNA"/>
</dbReference>
<dbReference type="RefSeq" id="NP_867551.1">
    <property type="nucleotide sequence ID" value="NC_005027.1"/>
</dbReference>
<dbReference type="RefSeq" id="WP_007331968.1">
    <property type="nucleotide sequence ID" value="NC_005027.1"/>
</dbReference>
<dbReference type="SMR" id="Q7UPG4"/>
<dbReference type="FunCoup" id="Q7UPG4">
    <property type="interactions" value="228"/>
</dbReference>
<dbReference type="STRING" id="243090.RB6959"/>
<dbReference type="EnsemblBacteria" id="CAD75098">
    <property type="protein sequence ID" value="CAD75098"/>
    <property type="gene ID" value="RB6959"/>
</dbReference>
<dbReference type="KEGG" id="rba:RB6959"/>
<dbReference type="PATRIC" id="fig|243090.15.peg.3369"/>
<dbReference type="eggNOG" id="COG2255">
    <property type="taxonomic scope" value="Bacteria"/>
</dbReference>
<dbReference type="HOGENOM" id="CLU_055599_1_0_0"/>
<dbReference type="InParanoid" id="Q7UPG4"/>
<dbReference type="OrthoDB" id="9804478at2"/>
<dbReference type="Proteomes" id="UP000001025">
    <property type="component" value="Chromosome"/>
</dbReference>
<dbReference type="GO" id="GO:0005737">
    <property type="term" value="C:cytoplasm"/>
    <property type="evidence" value="ECO:0007669"/>
    <property type="project" value="UniProtKB-SubCell"/>
</dbReference>
<dbReference type="GO" id="GO:0048476">
    <property type="term" value="C:Holliday junction resolvase complex"/>
    <property type="evidence" value="ECO:0007669"/>
    <property type="project" value="UniProtKB-UniRule"/>
</dbReference>
<dbReference type="GO" id="GO:0005524">
    <property type="term" value="F:ATP binding"/>
    <property type="evidence" value="ECO:0007669"/>
    <property type="project" value="UniProtKB-UniRule"/>
</dbReference>
<dbReference type="GO" id="GO:0016887">
    <property type="term" value="F:ATP hydrolysis activity"/>
    <property type="evidence" value="ECO:0007669"/>
    <property type="project" value="InterPro"/>
</dbReference>
<dbReference type="GO" id="GO:0000400">
    <property type="term" value="F:four-way junction DNA binding"/>
    <property type="evidence" value="ECO:0007669"/>
    <property type="project" value="UniProtKB-UniRule"/>
</dbReference>
<dbReference type="GO" id="GO:0009378">
    <property type="term" value="F:four-way junction helicase activity"/>
    <property type="evidence" value="ECO:0007669"/>
    <property type="project" value="InterPro"/>
</dbReference>
<dbReference type="GO" id="GO:0006310">
    <property type="term" value="P:DNA recombination"/>
    <property type="evidence" value="ECO:0007669"/>
    <property type="project" value="UniProtKB-UniRule"/>
</dbReference>
<dbReference type="GO" id="GO:0006281">
    <property type="term" value="P:DNA repair"/>
    <property type="evidence" value="ECO:0007669"/>
    <property type="project" value="UniProtKB-UniRule"/>
</dbReference>
<dbReference type="CDD" id="cd00009">
    <property type="entry name" value="AAA"/>
    <property type="match status" value="1"/>
</dbReference>
<dbReference type="Gene3D" id="1.10.8.60">
    <property type="match status" value="1"/>
</dbReference>
<dbReference type="Gene3D" id="3.40.50.300">
    <property type="entry name" value="P-loop containing nucleotide triphosphate hydrolases"/>
    <property type="match status" value="1"/>
</dbReference>
<dbReference type="Gene3D" id="1.10.10.10">
    <property type="entry name" value="Winged helix-like DNA-binding domain superfamily/Winged helix DNA-binding domain"/>
    <property type="match status" value="1"/>
</dbReference>
<dbReference type="HAMAP" id="MF_00016">
    <property type="entry name" value="DNA_HJ_migration_RuvB"/>
    <property type="match status" value="1"/>
</dbReference>
<dbReference type="InterPro" id="IPR003593">
    <property type="entry name" value="AAA+_ATPase"/>
</dbReference>
<dbReference type="InterPro" id="IPR041445">
    <property type="entry name" value="AAA_lid_4"/>
</dbReference>
<dbReference type="InterPro" id="IPR004605">
    <property type="entry name" value="DNA_helicase_Holl-junc_RuvB"/>
</dbReference>
<dbReference type="InterPro" id="IPR027417">
    <property type="entry name" value="P-loop_NTPase"/>
</dbReference>
<dbReference type="InterPro" id="IPR008824">
    <property type="entry name" value="RuvB-like_N"/>
</dbReference>
<dbReference type="InterPro" id="IPR008823">
    <property type="entry name" value="RuvB_C"/>
</dbReference>
<dbReference type="InterPro" id="IPR036388">
    <property type="entry name" value="WH-like_DNA-bd_sf"/>
</dbReference>
<dbReference type="InterPro" id="IPR036390">
    <property type="entry name" value="WH_DNA-bd_sf"/>
</dbReference>
<dbReference type="NCBIfam" id="NF000868">
    <property type="entry name" value="PRK00080.1"/>
    <property type="match status" value="1"/>
</dbReference>
<dbReference type="NCBIfam" id="TIGR00635">
    <property type="entry name" value="ruvB"/>
    <property type="match status" value="1"/>
</dbReference>
<dbReference type="PANTHER" id="PTHR42848">
    <property type="match status" value="1"/>
</dbReference>
<dbReference type="PANTHER" id="PTHR42848:SF1">
    <property type="entry name" value="HOLLIDAY JUNCTION BRANCH MIGRATION COMPLEX SUBUNIT RUVB"/>
    <property type="match status" value="1"/>
</dbReference>
<dbReference type="Pfam" id="PF17864">
    <property type="entry name" value="AAA_lid_4"/>
    <property type="match status" value="1"/>
</dbReference>
<dbReference type="Pfam" id="PF05491">
    <property type="entry name" value="RuvB_C"/>
    <property type="match status" value="1"/>
</dbReference>
<dbReference type="Pfam" id="PF05496">
    <property type="entry name" value="RuvB_N"/>
    <property type="match status" value="1"/>
</dbReference>
<dbReference type="SMART" id="SM00382">
    <property type="entry name" value="AAA"/>
    <property type="match status" value="1"/>
</dbReference>
<dbReference type="SUPFAM" id="SSF52540">
    <property type="entry name" value="P-loop containing nucleoside triphosphate hydrolases"/>
    <property type="match status" value="1"/>
</dbReference>
<dbReference type="SUPFAM" id="SSF46785">
    <property type="entry name" value="Winged helix' DNA-binding domain"/>
    <property type="match status" value="1"/>
</dbReference>
<name>RUVB_RHOBA</name>
<evidence type="ECO:0000255" key="1">
    <source>
        <dbReference type="HAMAP-Rule" id="MF_00016"/>
    </source>
</evidence>
<evidence type="ECO:0000256" key="2">
    <source>
        <dbReference type="SAM" id="MobiDB-lite"/>
    </source>
</evidence>
<sequence length="366" mass="40588">MIDRLMAREAIYQQSNPDPGGDPPEDGPPHGKNAADGGDEPDRGPDPDVTLRPQRMAEMVGQQDVIERLRIAIDAAQVRGEPLGHILFDGPPGLGKTTFATVIPSEMKTTVQMANGAGLKAPRDLLPYLTNVSRGSVLFIDEIHRVPRAIEEYLYTAMEDFRIDIVLGEGVNARTLNLSLEPFTLIGATTRAGMLTAPLRDRFQIREHLGWYTRKELAEIVLRNSKKLNIEVDPTSAGVIADRSRSTPRLANNRLLWVRDYAQSKTKGNVEASVCEAALDMIGIDHLGLDKQDRNYLDTLMRVFLGGPAGLDAIAHTMNVSSDTLEDEVEPFLLRSELLVRTRRGRLATPKAFEHMKRQMPDRPLS</sequence>
<reference key="1">
    <citation type="journal article" date="2003" name="Proc. Natl. Acad. Sci. U.S.A.">
        <title>Complete genome sequence of the marine planctomycete Pirellula sp. strain 1.</title>
        <authorList>
            <person name="Gloeckner F.O."/>
            <person name="Kube M."/>
            <person name="Bauer M."/>
            <person name="Teeling H."/>
            <person name="Lombardot T."/>
            <person name="Ludwig W."/>
            <person name="Gade D."/>
            <person name="Beck A."/>
            <person name="Borzym K."/>
            <person name="Heitmann K."/>
            <person name="Rabus R."/>
            <person name="Schlesner H."/>
            <person name="Amann R."/>
            <person name="Reinhardt R."/>
        </authorList>
    </citation>
    <scope>NUCLEOTIDE SEQUENCE [LARGE SCALE GENOMIC DNA]</scope>
    <source>
        <strain>DSM 10527 / NCIMB 13988 / SH1</strain>
    </source>
</reference>
<proteinExistence type="inferred from homology"/>
<protein>
    <recommendedName>
        <fullName evidence="1">Holliday junction branch migration complex subunit RuvB</fullName>
        <ecNumber evidence="1">3.6.4.-</ecNumber>
    </recommendedName>
</protein>
<gene>
    <name evidence="1" type="primary">ruvB</name>
    <name type="ordered locus">RB6959</name>
</gene>